<keyword id="KW-0413">Isomerase</keyword>
<organism>
    <name type="scientific">Brucella suis biovar 1 (strain 1330)</name>
    <dbReference type="NCBI Taxonomy" id="204722"/>
    <lineage>
        <taxon>Bacteria</taxon>
        <taxon>Pseudomonadati</taxon>
        <taxon>Pseudomonadota</taxon>
        <taxon>Alphaproteobacteria</taxon>
        <taxon>Hyphomicrobiales</taxon>
        <taxon>Brucellaceae</taxon>
        <taxon>Brucella/Ochrobactrum group</taxon>
        <taxon>Brucella</taxon>
    </lineage>
</organism>
<protein>
    <recommendedName>
        <fullName evidence="1">Uronate isomerase</fullName>
        <ecNumber evidence="1">5.3.1.12</ecNumber>
    </recommendedName>
    <alternativeName>
        <fullName evidence="1">Glucuronate isomerase</fullName>
    </alternativeName>
    <alternativeName>
        <fullName evidence="1">Uronic isomerase</fullName>
    </alternativeName>
</protein>
<gene>
    <name evidence="1" type="primary">uxaC</name>
    <name type="ordered locus">BRA0812</name>
    <name type="ordered locus">BS1330_II0805</name>
</gene>
<sequence length="466" mass="52750">MALNPDRLFSAEPGTREIARRLFASVEKLPIISPHGHTEPIWYARNEAFPDPASLFVKPDHYITRMLYSQGHSLESLGIASRDGRPSETDARKIWRLFATNWYLFRATPSRLWFEHAMETVFGITERLSQENADRIFDAIADQLTQPHMRPRALYDRFNIEAISTTDAATDPLIYHDEVIASGWHGRIIPAYRPDAAVDAGRPDFASEVEKLVGVAGTPLTWQGYLDAHRNRREYFKRRGATSSDHGHPTAQTADLSAGDASRLFDRVIKGNASTSDAEMFRAQMLTEMARMSIDDGLVMQIHPGSFRNHNPTVFERFGLDKGADIPRQTGFVDQLKPLLDAFGNDPRLTVILFTLDETAYSRELAPLAGHYPALKLGPAWWFFDSPEGILRYRKLTTETAGFYNTVGFNDDTRAYLSIPARHDMARRVDCAYLAGLVADHRLEEDEAYEVAHDLAYRLAKQTYKL</sequence>
<reference key="1">
    <citation type="journal article" date="2002" name="Proc. Natl. Acad. Sci. U.S.A.">
        <title>The Brucella suis genome reveals fundamental similarities between animal and plant pathogens and symbionts.</title>
        <authorList>
            <person name="Paulsen I.T."/>
            <person name="Seshadri R."/>
            <person name="Nelson K.E."/>
            <person name="Eisen J.A."/>
            <person name="Heidelberg J.F."/>
            <person name="Read T.D."/>
            <person name="Dodson R.J."/>
            <person name="Umayam L.A."/>
            <person name="Brinkac L.M."/>
            <person name="Beanan M.J."/>
            <person name="Daugherty S.C."/>
            <person name="DeBoy R.T."/>
            <person name="Durkin A.S."/>
            <person name="Kolonay J.F."/>
            <person name="Madupu R."/>
            <person name="Nelson W.C."/>
            <person name="Ayodeji B."/>
            <person name="Kraul M."/>
            <person name="Shetty J."/>
            <person name="Malek J.A."/>
            <person name="Van Aken S.E."/>
            <person name="Riedmuller S."/>
            <person name="Tettelin H."/>
            <person name="Gill S.R."/>
            <person name="White O."/>
            <person name="Salzberg S.L."/>
            <person name="Hoover D.L."/>
            <person name="Lindler L.E."/>
            <person name="Halling S.M."/>
            <person name="Boyle S.M."/>
            <person name="Fraser C.M."/>
        </authorList>
    </citation>
    <scope>NUCLEOTIDE SEQUENCE [LARGE SCALE GENOMIC DNA]</scope>
    <source>
        <strain>1330</strain>
    </source>
</reference>
<reference key="2">
    <citation type="journal article" date="2011" name="J. Bacteriol.">
        <title>Revised genome sequence of Brucella suis 1330.</title>
        <authorList>
            <person name="Tae H."/>
            <person name="Shallom S."/>
            <person name="Settlage R."/>
            <person name="Preston D."/>
            <person name="Adams L.G."/>
            <person name="Garner H.R."/>
        </authorList>
    </citation>
    <scope>NUCLEOTIDE SEQUENCE [LARGE SCALE GENOMIC DNA]</scope>
    <source>
        <strain>1330</strain>
    </source>
</reference>
<accession>Q8FVM4</accession>
<accession>G0KDH6</accession>
<name>UXAC_BRUSU</name>
<evidence type="ECO:0000255" key="1">
    <source>
        <dbReference type="HAMAP-Rule" id="MF_00675"/>
    </source>
</evidence>
<feature type="chain" id="PRO_0000172765" description="Uronate isomerase">
    <location>
        <begin position="1"/>
        <end position="466"/>
    </location>
</feature>
<dbReference type="EC" id="5.3.1.12" evidence="1"/>
<dbReference type="EMBL" id="AE014292">
    <property type="protein sequence ID" value="AAN33988.1"/>
    <property type="molecule type" value="Genomic_DNA"/>
</dbReference>
<dbReference type="EMBL" id="CP002998">
    <property type="protein sequence ID" value="AEM20264.1"/>
    <property type="molecule type" value="Genomic_DNA"/>
</dbReference>
<dbReference type="RefSeq" id="WP_004687147.1">
    <property type="nucleotide sequence ID" value="NZ_KN046805.1"/>
</dbReference>
<dbReference type="SMR" id="Q8FVM4"/>
<dbReference type="GeneID" id="55592462"/>
<dbReference type="KEGG" id="bms:BRA0812"/>
<dbReference type="KEGG" id="bsi:BS1330_II0805"/>
<dbReference type="PATRIC" id="fig|204722.22.peg.2188"/>
<dbReference type="HOGENOM" id="CLU_044465_0_0_5"/>
<dbReference type="PhylomeDB" id="Q8FVM4"/>
<dbReference type="UniPathway" id="UPA00246"/>
<dbReference type="Proteomes" id="UP000007104">
    <property type="component" value="Chromosome II"/>
</dbReference>
<dbReference type="GO" id="GO:0008880">
    <property type="term" value="F:glucuronate isomerase activity"/>
    <property type="evidence" value="ECO:0007669"/>
    <property type="project" value="UniProtKB-UniRule"/>
</dbReference>
<dbReference type="GO" id="GO:0019698">
    <property type="term" value="P:D-galacturonate catabolic process"/>
    <property type="evidence" value="ECO:0007669"/>
    <property type="project" value="TreeGrafter"/>
</dbReference>
<dbReference type="GO" id="GO:0042840">
    <property type="term" value="P:D-glucuronate catabolic process"/>
    <property type="evidence" value="ECO:0007669"/>
    <property type="project" value="TreeGrafter"/>
</dbReference>
<dbReference type="Gene3D" id="3.20.20.140">
    <property type="entry name" value="Metal-dependent hydrolases"/>
    <property type="match status" value="1"/>
</dbReference>
<dbReference type="Gene3D" id="1.10.2020.10">
    <property type="entry name" value="uronate isomerase, domain 2, chain A"/>
    <property type="match status" value="1"/>
</dbReference>
<dbReference type="HAMAP" id="MF_00675">
    <property type="entry name" value="UxaC"/>
    <property type="match status" value="1"/>
</dbReference>
<dbReference type="InterPro" id="IPR032466">
    <property type="entry name" value="Metal_Hydrolase"/>
</dbReference>
<dbReference type="InterPro" id="IPR003766">
    <property type="entry name" value="Uronate_isomerase"/>
</dbReference>
<dbReference type="NCBIfam" id="NF002794">
    <property type="entry name" value="PRK02925.1"/>
    <property type="match status" value="1"/>
</dbReference>
<dbReference type="PANTHER" id="PTHR30068">
    <property type="entry name" value="URONATE ISOMERASE"/>
    <property type="match status" value="1"/>
</dbReference>
<dbReference type="PANTHER" id="PTHR30068:SF4">
    <property type="entry name" value="URONATE ISOMERASE"/>
    <property type="match status" value="1"/>
</dbReference>
<dbReference type="Pfam" id="PF02614">
    <property type="entry name" value="UxaC"/>
    <property type="match status" value="1"/>
</dbReference>
<dbReference type="SUPFAM" id="SSF51556">
    <property type="entry name" value="Metallo-dependent hydrolases"/>
    <property type="match status" value="1"/>
</dbReference>
<comment type="catalytic activity">
    <reaction evidence="1">
        <text>D-glucuronate = D-fructuronate</text>
        <dbReference type="Rhea" id="RHEA:13049"/>
        <dbReference type="ChEBI" id="CHEBI:58720"/>
        <dbReference type="ChEBI" id="CHEBI:59863"/>
        <dbReference type="EC" id="5.3.1.12"/>
    </reaction>
</comment>
<comment type="catalytic activity">
    <reaction evidence="1">
        <text>aldehydo-D-galacturonate = keto-D-tagaturonate</text>
        <dbReference type="Rhea" id="RHEA:27702"/>
        <dbReference type="ChEBI" id="CHEBI:12952"/>
        <dbReference type="ChEBI" id="CHEBI:17886"/>
        <dbReference type="EC" id="5.3.1.12"/>
    </reaction>
</comment>
<comment type="pathway">
    <text evidence="1">Carbohydrate metabolism; pentose and glucuronate interconversion.</text>
</comment>
<comment type="similarity">
    <text evidence="1">Belongs to the metallo-dependent hydrolases superfamily. Uronate isomerase family.</text>
</comment>
<proteinExistence type="inferred from homology"/>